<protein>
    <recommendedName>
        <fullName evidence="1">Argininosuccinate synthase</fullName>
        <ecNumber evidence="1">6.3.4.5</ecNumber>
    </recommendedName>
    <alternativeName>
        <fullName evidence="1">Citrulline--aspartate ligase</fullName>
    </alternativeName>
</protein>
<dbReference type="EC" id="6.3.4.5" evidence="1"/>
<dbReference type="EMBL" id="CP000350">
    <property type="protein sequence ID" value="ABJ77286.1"/>
    <property type="molecule type" value="Genomic_DNA"/>
</dbReference>
<dbReference type="RefSeq" id="WP_011669254.1">
    <property type="nucleotide sequence ID" value="NC_008510.1"/>
</dbReference>
<dbReference type="SMR" id="Q04P84"/>
<dbReference type="KEGG" id="lbj:LBJ_2885"/>
<dbReference type="HOGENOM" id="CLU_032784_4_2_12"/>
<dbReference type="UniPathway" id="UPA00068">
    <property type="reaction ID" value="UER00113"/>
</dbReference>
<dbReference type="Proteomes" id="UP000000656">
    <property type="component" value="Chromosome 1"/>
</dbReference>
<dbReference type="GO" id="GO:0005737">
    <property type="term" value="C:cytoplasm"/>
    <property type="evidence" value="ECO:0007669"/>
    <property type="project" value="UniProtKB-SubCell"/>
</dbReference>
<dbReference type="GO" id="GO:0004055">
    <property type="term" value="F:argininosuccinate synthase activity"/>
    <property type="evidence" value="ECO:0007669"/>
    <property type="project" value="UniProtKB-UniRule"/>
</dbReference>
<dbReference type="GO" id="GO:0005524">
    <property type="term" value="F:ATP binding"/>
    <property type="evidence" value="ECO:0007669"/>
    <property type="project" value="UniProtKB-UniRule"/>
</dbReference>
<dbReference type="GO" id="GO:0000053">
    <property type="term" value="P:argininosuccinate metabolic process"/>
    <property type="evidence" value="ECO:0007669"/>
    <property type="project" value="TreeGrafter"/>
</dbReference>
<dbReference type="GO" id="GO:0006526">
    <property type="term" value="P:L-arginine biosynthetic process"/>
    <property type="evidence" value="ECO:0007669"/>
    <property type="project" value="UniProtKB-UniRule"/>
</dbReference>
<dbReference type="GO" id="GO:0000050">
    <property type="term" value="P:urea cycle"/>
    <property type="evidence" value="ECO:0007669"/>
    <property type="project" value="TreeGrafter"/>
</dbReference>
<dbReference type="CDD" id="cd01999">
    <property type="entry name" value="ASS"/>
    <property type="match status" value="1"/>
</dbReference>
<dbReference type="FunFam" id="3.40.50.620:FF:000019">
    <property type="entry name" value="Argininosuccinate synthase"/>
    <property type="match status" value="1"/>
</dbReference>
<dbReference type="FunFam" id="3.90.1260.10:FF:000007">
    <property type="entry name" value="Argininosuccinate synthase"/>
    <property type="match status" value="1"/>
</dbReference>
<dbReference type="Gene3D" id="3.90.1260.10">
    <property type="entry name" value="Argininosuccinate synthetase, chain A, domain 2"/>
    <property type="match status" value="1"/>
</dbReference>
<dbReference type="Gene3D" id="3.40.50.620">
    <property type="entry name" value="HUPs"/>
    <property type="match status" value="1"/>
</dbReference>
<dbReference type="Gene3D" id="1.20.5.470">
    <property type="entry name" value="Single helix bin"/>
    <property type="match status" value="1"/>
</dbReference>
<dbReference type="HAMAP" id="MF_00005">
    <property type="entry name" value="Arg_succ_synth_type1"/>
    <property type="match status" value="1"/>
</dbReference>
<dbReference type="InterPro" id="IPR048268">
    <property type="entry name" value="Arginosuc_syn_C"/>
</dbReference>
<dbReference type="InterPro" id="IPR048267">
    <property type="entry name" value="Arginosuc_syn_N"/>
</dbReference>
<dbReference type="InterPro" id="IPR001518">
    <property type="entry name" value="Arginosuc_synth"/>
</dbReference>
<dbReference type="InterPro" id="IPR018223">
    <property type="entry name" value="Arginosuc_synth_CS"/>
</dbReference>
<dbReference type="InterPro" id="IPR023434">
    <property type="entry name" value="Arginosuc_synth_type_1_subfam"/>
</dbReference>
<dbReference type="InterPro" id="IPR024074">
    <property type="entry name" value="AS_cat/multimer_dom_body"/>
</dbReference>
<dbReference type="InterPro" id="IPR014729">
    <property type="entry name" value="Rossmann-like_a/b/a_fold"/>
</dbReference>
<dbReference type="NCBIfam" id="TIGR00032">
    <property type="entry name" value="argG"/>
    <property type="match status" value="1"/>
</dbReference>
<dbReference type="NCBIfam" id="NF001770">
    <property type="entry name" value="PRK00509.1"/>
    <property type="match status" value="1"/>
</dbReference>
<dbReference type="PANTHER" id="PTHR11587">
    <property type="entry name" value="ARGININOSUCCINATE SYNTHASE"/>
    <property type="match status" value="1"/>
</dbReference>
<dbReference type="PANTHER" id="PTHR11587:SF2">
    <property type="entry name" value="ARGININOSUCCINATE SYNTHASE"/>
    <property type="match status" value="1"/>
</dbReference>
<dbReference type="Pfam" id="PF20979">
    <property type="entry name" value="Arginosuc_syn_C"/>
    <property type="match status" value="1"/>
</dbReference>
<dbReference type="Pfam" id="PF00764">
    <property type="entry name" value="Arginosuc_synth"/>
    <property type="match status" value="1"/>
</dbReference>
<dbReference type="SUPFAM" id="SSF52402">
    <property type="entry name" value="Adenine nucleotide alpha hydrolases-like"/>
    <property type="match status" value="1"/>
</dbReference>
<dbReference type="SUPFAM" id="SSF69864">
    <property type="entry name" value="Argininosuccinate synthetase, C-terminal domain"/>
    <property type="match status" value="1"/>
</dbReference>
<dbReference type="PROSITE" id="PS00564">
    <property type="entry name" value="ARGININOSUCCIN_SYN_1"/>
    <property type="match status" value="1"/>
</dbReference>
<dbReference type="PROSITE" id="PS00565">
    <property type="entry name" value="ARGININOSUCCIN_SYN_2"/>
    <property type="match status" value="1"/>
</dbReference>
<reference key="1">
    <citation type="journal article" date="2006" name="Proc. Natl. Acad. Sci. U.S.A.">
        <title>Genome reduction in Leptospira borgpetersenii reflects limited transmission potential.</title>
        <authorList>
            <person name="Bulach D.M."/>
            <person name="Zuerner R.L."/>
            <person name="Wilson P."/>
            <person name="Seemann T."/>
            <person name="McGrath A."/>
            <person name="Cullen P.A."/>
            <person name="Davis J."/>
            <person name="Johnson M."/>
            <person name="Kuczek E."/>
            <person name="Alt D.P."/>
            <person name="Peterson-Burch B."/>
            <person name="Coppel R.L."/>
            <person name="Rood J.I."/>
            <person name="Davies J.K."/>
            <person name="Adler B."/>
        </authorList>
    </citation>
    <scope>NUCLEOTIDE SEQUENCE [LARGE SCALE GENOMIC DNA]</scope>
    <source>
        <strain>JB197</strain>
    </source>
</reference>
<proteinExistence type="inferred from homology"/>
<gene>
    <name evidence="1" type="primary">argG</name>
    <name type="ordered locus">LBJ_2885</name>
</gene>
<sequence>MAQSKPVKKIVLAYSGGLDTSVILTWLKETYGCEVIAFTADVGQKEELSGLEEKGIKTGASKVYIQDLRLEFARDFIFPAIQGNALYEMRYLLGTSLARPLIAKAMVEVAEKEGADAFAHGATGKGNDQVRFELGVKSLAPEKTIIAPWRIWNFGGRSDLIEYAKSKGIPVSITVEKPYSMDRNLMHISYEGGILEDPYREPDEKMFLLTTSPEKAPDAPEYLELDFQEGNCVAINGKKLNPYEVMEALNTIAGKHGVGRVDIVENRLVGIKSRGVYETPGGTVLFLAHRDLESITIDRDTQHHKDKLSIEFAELIYNGHWFSSRMKAVRAFITETQRYVTGAVKVKLYKGTCSIVGRKSSVSLYNPKMATFEKEELYNQKDAEGFINIYGLPAQETARLRKK</sequence>
<feature type="chain" id="PRO_1000000402" description="Argininosuccinate synthase">
    <location>
        <begin position="1"/>
        <end position="403"/>
    </location>
</feature>
<feature type="binding site" evidence="1">
    <location>
        <begin position="13"/>
        <end position="21"/>
    </location>
    <ligand>
        <name>ATP</name>
        <dbReference type="ChEBI" id="CHEBI:30616"/>
    </ligand>
</feature>
<feature type="binding site" evidence="1">
    <location>
        <position position="40"/>
    </location>
    <ligand>
        <name>ATP</name>
        <dbReference type="ChEBI" id="CHEBI:30616"/>
    </ligand>
</feature>
<feature type="binding site" evidence="1">
    <location>
        <position position="91"/>
    </location>
    <ligand>
        <name>L-citrulline</name>
        <dbReference type="ChEBI" id="CHEBI:57743"/>
    </ligand>
</feature>
<feature type="binding site" evidence="1">
    <location>
        <position position="96"/>
    </location>
    <ligand>
        <name>L-citrulline</name>
        <dbReference type="ChEBI" id="CHEBI:57743"/>
    </ligand>
</feature>
<feature type="binding site" evidence="1">
    <location>
        <position position="121"/>
    </location>
    <ligand>
        <name>ATP</name>
        <dbReference type="ChEBI" id="CHEBI:30616"/>
    </ligand>
</feature>
<feature type="binding site" evidence="1">
    <location>
        <position position="123"/>
    </location>
    <ligand>
        <name>L-aspartate</name>
        <dbReference type="ChEBI" id="CHEBI:29991"/>
    </ligand>
</feature>
<feature type="binding site" evidence="1">
    <location>
        <position position="127"/>
    </location>
    <ligand>
        <name>L-aspartate</name>
        <dbReference type="ChEBI" id="CHEBI:29991"/>
    </ligand>
</feature>
<feature type="binding site" evidence="1">
    <location>
        <position position="127"/>
    </location>
    <ligand>
        <name>L-citrulline</name>
        <dbReference type="ChEBI" id="CHEBI:57743"/>
    </ligand>
</feature>
<feature type="binding site" evidence="1">
    <location>
        <position position="128"/>
    </location>
    <ligand>
        <name>L-aspartate</name>
        <dbReference type="ChEBI" id="CHEBI:29991"/>
    </ligand>
</feature>
<feature type="binding site" evidence="1">
    <location>
        <position position="131"/>
    </location>
    <ligand>
        <name>L-citrulline</name>
        <dbReference type="ChEBI" id="CHEBI:57743"/>
    </ligand>
</feature>
<feature type="binding site" evidence="1">
    <location>
        <position position="180"/>
    </location>
    <ligand>
        <name>L-citrulline</name>
        <dbReference type="ChEBI" id="CHEBI:57743"/>
    </ligand>
</feature>
<feature type="binding site" evidence="1">
    <location>
        <position position="189"/>
    </location>
    <ligand>
        <name>L-citrulline</name>
        <dbReference type="ChEBI" id="CHEBI:57743"/>
    </ligand>
</feature>
<feature type="binding site" evidence="1">
    <location>
        <position position="265"/>
    </location>
    <ligand>
        <name>L-citrulline</name>
        <dbReference type="ChEBI" id="CHEBI:57743"/>
    </ligand>
</feature>
<feature type="binding site" evidence="1">
    <location>
        <position position="277"/>
    </location>
    <ligand>
        <name>L-citrulline</name>
        <dbReference type="ChEBI" id="CHEBI:57743"/>
    </ligand>
</feature>
<name>ASSY_LEPBJ</name>
<organism>
    <name type="scientific">Leptospira borgpetersenii serovar Hardjo-bovis (strain JB197)</name>
    <dbReference type="NCBI Taxonomy" id="355277"/>
    <lineage>
        <taxon>Bacteria</taxon>
        <taxon>Pseudomonadati</taxon>
        <taxon>Spirochaetota</taxon>
        <taxon>Spirochaetia</taxon>
        <taxon>Leptospirales</taxon>
        <taxon>Leptospiraceae</taxon>
        <taxon>Leptospira</taxon>
    </lineage>
</organism>
<keyword id="KW-0028">Amino-acid biosynthesis</keyword>
<keyword id="KW-0055">Arginine biosynthesis</keyword>
<keyword id="KW-0067">ATP-binding</keyword>
<keyword id="KW-0963">Cytoplasm</keyword>
<keyword id="KW-0436">Ligase</keyword>
<keyword id="KW-0547">Nucleotide-binding</keyword>
<comment type="catalytic activity">
    <reaction evidence="1">
        <text>L-citrulline + L-aspartate + ATP = 2-(N(omega)-L-arginino)succinate + AMP + diphosphate + H(+)</text>
        <dbReference type="Rhea" id="RHEA:10932"/>
        <dbReference type="ChEBI" id="CHEBI:15378"/>
        <dbReference type="ChEBI" id="CHEBI:29991"/>
        <dbReference type="ChEBI" id="CHEBI:30616"/>
        <dbReference type="ChEBI" id="CHEBI:33019"/>
        <dbReference type="ChEBI" id="CHEBI:57472"/>
        <dbReference type="ChEBI" id="CHEBI:57743"/>
        <dbReference type="ChEBI" id="CHEBI:456215"/>
        <dbReference type="EC" id="6.3.4.5"/>
    </reaction>
</comment>
<comment type="pathway">
    <text evidence="1">Amino-acid biosynthesis; L-arginine biosynthesis; L-arginine from L-ornithine and carbamoyl phosphate: step 2/3.</text>
</comment>
<comment type="subunit">
    <text evidence="1">Homotetramer.</text>
</comment>
<comment type="subcellular location">
    <subcellularLocation>
        <location evidence="1">Cytoplasm</location>
    </subcellularLocation>
</comment>
<comment type="similarity">
    <text evidence="1">Belongs to the argininosuccinate synthase family. Type 1 subfamily.</text>
</comment>
<evidence type="ECO:0000255" key="1">
    <source>
        <dbReference type="HAMAP-Rule" id="MF_00005"/>
    </source>
</evidence>
<accession>Q04P84</accession>